<protein>
    <recommendedName>
        <fullName evidence="1">Cystic fibrosis transmembrane conductance regulator</fullName>
        <shortName>CFTR</shortName>
    </recommendedName>
    <alternativeName>
        <fullName>ATP-binding cassette sub-family C member 7</fullName>
    </alternativeName>
    <alternativeName>
        <fullName>Channel conductance-controlling ATPase</fullName>
        <ecNumber evidence="1">5.6.1.6</ecNumber>
    </alternativeName>
    <alternativeName>
        <fullName>cAMP-dependent chloride channel</fullName>
    </alternativeName>
</protein>
<keyword id="KW-0067">ATP-binding</keyword>
<keyword id="KW-1003">Cell membrane</keyword>
<keyword id="KW-0868">Chloride</keyword>
<keyword id="KW-0869">Chloride channel</keyword>
<keyword id="KW-0256">Endoplasmic reticulum</keyword>
<keyword id="KW-0967">Endosome</keyword>
<keyword id="KW-0325">Glycoprotein</keyword>
<keyword id="KW-0407">Ion channel</keyword>
<keyword id="KW-0406">Ion transport</keyword>
<keyword id="KW-0413">Isomerase</keyword>
<keyword id="KW-1017">Isopeptide bond</keyword>
<keyword id="KW-0449">Lipoprotein</keyword>
<keyword id="KW-0472">Membrane</keyword>
<keyword id="KW-0547">Nucleotide-binding</keyword>
<keyword id="KW-0539">Nucleus</keyword>
<keyword id="KW-0564">Palmitate</keyword>
<keyword id="KW-0597">Phosphoprotein</keyword>
<keyword id="KW-1185">Reference proteome</keyword>
<keyword id="KW-0677">Repeat</keyword>
<keyword id="KW-0812">Transmembrane</keyword>
<keyword id="KW-1133">Transmembrane helix</keyword>
<keyword id="KW-0813">Transport</keyword>
<keyword id="KW-0832">Ubl conjugation</keyword>
<proteinExistence type="inferred from homology"/>
<feature type="chain" id="PRO_0000093423" description="Cystic fibrosis transmembrane conductance regulator">
    <location>
        <begin position="1"/>
        <end position="1481"/>
    </location>
</feature>
<feature type="topological domain" description="Cytoplasmic" evidence="1">
    <location>
        <begin position="1"/>
        <end position="77"/>
    </location>
</feature>
<feature type="transmembrane region" description="Helical; Name=1" evidence="1">
    <location>
        <begin position="78"/>
        <end position="98"/>
    </location>
</feature>
<feature type="topological domain" description="Extracellular" evidence="1">
    <location>
        <begin position="99"/>
        <end position="122"/>
    </location>
</feature>
<feature type="transmembrane region" description="Helical; Name=2" evidence="1">
    <location>
        <begin position="123"/>
        <end position="146"/>
    </location>
</feature>
<feature type="topological domain" description="Cytoplasmic" evidence="1">
    <location>
        <begin position="147"/>
        <end position="195"/>
    </location>
</feature>
<feature type="transmembrane region" description="Helical; Name=3" evidence="1">
    <location>
        <begin position="196"/>
        <end position="216"/>
    </location>
</feature>
<feature type="topological domain" description="Extracellular" evidence="1">
    <location>
        <begin position="217"/>
        <end position="222"/>
    </location>
</feature>
<feature type="transmembrane region" description="Helical; Name=4" evidence="1">
    <location>
        <begin position="223"/>
        <end position="243"/>
    </location>
</feature>
<feature type="topological domain" description="Cytoplasmic" evidence="1">
    <location>
        <begin position="244"/>
        <end position="298"/>
    </location>
</feature>
<feature type="transmembrane region" description="Helical; Name=5" evidence="1">
    <location>
        <begin position="299"/>
        <end position="319"/>
    </location>
</feature>
<feature type="topological domain" description="Extracellular" evidence="1">
    <location>
        <begin position="320"/>
        <end position="339"/>
    </location>
</feature>
<feature type="transmembrane region" description="Helical; Name=6" evidence="1">
    <location>
        <begin position="340"/>
        <end position="358"/>
    </location>
</feature>
<feature type="topological domain" description="Cytoplasmic" evidence="1">
    <location>
        <begin position="359"/>
        <end position="858"/>
    </location>
</feature>
<feature type="transmembrane region" description="Helical; Name=7" evidence="1">
    <location>
        <begin position="859"/>
        <end position="879"/>
    </location>
</feature>
<feature type="topological domain" description="Extracellular" evidence="1">
    <location>
        <begin position="880"/>
        <end position="918"/>
    </location>
</feature>
<feature type="transmembrane region" description="Discontinuously helical; Name=8" evidence="1">
    <location>
        <begin position="919"/>
        <end position="939"/>
    </location>
</feature>
<feature type="topological domain" description="Cytoplasmic" evidence="1">
    <location>
        <begin position="940"/>
        <end position="990"/>
    </location>
</feature>
<feature type="transmembrane region" description="Helical; Name=9" evidence="1">
    <location>
        <begin position="991"/>
        <end position="1011"/>
    </location>
</feature>
<feature type="topological domain" description="Extracellular" evidence="1">
    <location>
        <begin position="1012"/>
        <end position="1013"/>
    </location>
</feature>
<feature type="transmembrane region" description="Helical; Name=10" evidence="1">
    <location>
        <begin position="1014"/>
        <end position="1034"/>
    </location>
</feature>
<feature type="topological domain" description="Cytoplasmic" evidence="1">
    <location>
        <begin position="1035"/>
        <end position="1095"/>
    </location>
</feature>
<feature type="transmembrane region" description="Helical; Name=11" evidence="1">
    <location>
        <begin position="1096"/>
        <end position="1116"/>
    </location>
</feature>
<feature type="topological domain" description="Extracellular" evidence="1">
    <location>
        <begin position="1117"/>
        <end position="1130"/>
    </location>
</feature>
<feature type="transmembrane region" description="Helical; Name=12" evidence="1">
    <location>
        <begin position="1131"/>
        <end position="1151"/>
    </location>
</feature>
<feature type="topological domain" description="Cytoplasmic" evidence="1">
    <location>
        <begin position="1152"/>
        <end position="1481"/>
    </location>
</feature>
<feature type="domain" description="ABC transmembrane type-1 1" evidence="6">
    <location>
        <begin position="81"/>
        <end position="365"/>
    </location>
</feature>
<feature type="domain" description="ABC transporter 1" evidence="5">
    <location>
        <begin position="423"/>
        <end position="646"/>
    </location>
</feature>
<feature type="domain" description="ABC transmembrane type-1 2" evidence="6">
    <location>
        <begin position="859"/>
        <end position="1155"/>
    </location>
</feature>
<feature type="domain" description="ABC transporter 2" evidence="5">
    <location>
        <begin position="1211"/>
        <end position="1444"/>
    </location>
</feature>
<feature type="region of interest" description="Disordered R region" evidence="1">
    <location>
        <begin position="654"/>
        <end position="831"/>
    </location>
</feature>
<feature type="region of interest" description="Interaction with GORASP2" evidence="1">
    <location>
        <begin position="1387"/>
        <end position="1481"/>
    </location>
</feature>
<feature type="short sequence motif" description="PDZ-binding" evidence="1">
    <location>
        <begin position="1479"/>
        <end position="1481"/>
    </location>
</feature>
<feature type="binding site" evidence="1">
    <location>
        <position position="401"/>
    </location>
    <ligand>
        <name>ATP</name>
        <dbReference type="ChEBI" id="CHEBI:30616"/>
        <label>1</label>
    </ligand>
</feature>
<feature type="binding site" evidence="1">
    <location>
        <position position="434"/>
    </location>
    <ligand>
        <name>ATP</name>
        <dbReference type="ChEBI" id="CHEBI:30616"/>
        <label>1</label>
    </ligand>
</feature>
<feature type="binding site" evidence="5">
    <location>
        <begin position="458"/>
        <end position="465"/>
    </location>
    <ligand>
        <name>ATP</name>
        <dbReference type="ChEBI" id="CHEBI:30616"/>
        <label>1</label>
    </ligand>
</feature>
<feature type="binding site" evidence="2">
    <location>
        <position position="493"/>
    </location>
    <ligand>
        <name>ATP</name>
        <dbReference type="ChEBI" id="CHEBI:30616"/>
        <label>1</label>
    </ligand>
</feature>
<feature type="binding site" evidence="1">
    <location>
        <position position="1220"/>
    </location>
    <ligand>
        <name>ATP</name>
        <dbReference type="ChEBI" id="CHEBI:30616"/>
        <label>2</label>
    </ligand>
</feature>
<feature type="binding site" evidence="5">
    <location>
        <begin position="1245"/>
        <end position="1252"/>
    </location>
    <ligand>
        <name>ATP</name>
        <dbReference type="ChEBI" id="CHEBI:30616"/>
        <label>2</label>
    </ligand>
</feature>
<feature type="modified residue" description="Phosphoserine" evidence="1">
    <location>
        <position position="549"/>
    </location>
</feature>
<feature type="modified residue" description="Phosphoserine" evidence="1">
    <location>
        <position position="660"/>
    </location>
</feature>
<feature type="modified residue" description="Phosphoserine; by PKA" evidence="1">
    <location>
        <position position="670"/>
    </location>
</feature>
<feature type="modified residue" description="Phosphoserine" evidence="1">
    <location>
        <position position="686"/>
    </location>
</feature>
<feature type="modified residue" description="Phosphoserine" evidence="1">
    <location>
        <position position="700"/>
    </location>
</feature>
<feature type="modified residue" description="Phosphoserine" evidence="1">
    <location>
        <position position="712"/>
    </location>
</feature>
<feature type="modified residue" description="Phosphothreonine" evidence="1">
    <location>
        <position position="717"/>
    </location>
</feature>
<feature type="modified residue" description="Phosphoserine" evidence="1">
    <location>
        <position position="737"/>
    </location>
</feature>
<feature type="modified residue" description="Phosphoserine" evidence="1">
    <location>
        <position position="753"/>
    </location>
</feature>
<feature type="modified residue" description="Phosphoserine" evidence="1">
    <location>
        <position position="768"/>
    </location>
</feature>
<feature type="modified residue" description="Phosphoserine" evidence="1">
    <location>
        <position position="790"/>
    </location>
</feature>
<feature type="modified residue" description="Phosphoserine" evidence="1">
    <location>
        <position position="795"/>
    </location>
</feature>
<feature type="modified residue" description="Phosphoserine" evidence="1">
    <location>
        <position position="813"/>
    </location>
</feature>
<feature type="modified residue" description="Phosphoserine" evidence="1">
    <location>
        <position position="1445"/>
    </location>
</feature>
<feature type="modified residue" description="Phosphoserine" evidence="1">
    <location>
        <position position="1457"/>
    </location>
</feature>
<feature type="lipid moiety-binding region" description="S-palmitoyl cysteine" evidence="1">
    <location>
        <position position="524"/>
    </location>
</feature>
<feature type="lipid moiety-binding region" description="S-palmitoyl cysteine" evidence="1">
    <location>
        <position position="1396"/>
    </location>
</feature>
<feature type="glycosylation site" description="N-linked (GlcNAc...) asparagine" evidence="4">
    <location>
        <position position="894"/>
    </location>
</feature>
<feature type="glycosylation site" description="N-linked (GlcNAc...) asparagine" evidence="4">
    <location>
        <position position="900"/>
    </location>
</feature>
<feature type="cross-link" description="Glycyl lysine isopeptide (Lys-Gly) (interchain with G-Cter in ubiquitin)" evidence="1">
    <location>
        <position position="688"/>
    </location>
</feature>
<reference key="1">
    <citation type="submission" date="1999-06" db="EMBL/GenBank/DDBJ databases">
        <title>CFTR genomic sequences from five primate species.</title>
        <authorList>
            <person name="Wine J.J."/>
            <person name="Kuo E."/>
            <person name="Hurlock G."/>
            <person name="Glavac D."/>
            <person name="Dean M."/>
        </authorList>
    </citation>
    <scope>NUCLEOTIDE SEQUENCE [GENOMIC DNA]</scope>
</reference>
<evidence type="ECO:0000250" key="1">
    <source>
        <dbReference type="UniProtKB" id="P13569"/>
    </source>
</evidence>
<evidence type="ECO:0000250" key="2">
    <source>
        <dbReference type="UniProtKB" id="P26361"/>
    </source>
</evidence>
<evidence type="ECO:0000250" key="3">
    <source>
        <dbReference type="UniProtKB" id="P34158"/>
    </source>
</evidence>
<evidence type="ECO:0000255" key="4"/>
<evidence type="ECO:0000255" key="5">
    <source>
        <dbReference type="PROSITE-ProRule" id="PRU00434"/>
    </source>
</evidence>
<evidence type="ECO:0000255" key="6">
    <source>
        <dbReference type="PROSITE-ProRule" id="PRU00441"/>
    </source>
</evidence>
<evidence type="ECO:0000305" key="7"/>
<organism>
    <name type="scientific">Macaca nemestrina</name>
    <name type="common">Pig-tailed macaque</name>
    <dbReference type="NCBI Taxonomy" id="9545"/>
    <lineage>
        <taxon>Eukaryota</taxon>
        <taxon>Metazoa</taxon>
        <taxon>Chordata</taxon>
        <taxon>Craniata</taxon>
        <taxon>Vertebrata</taxon>
        <taxon>Euteleostomi</taxon>
        <taxon>Mammalia</taxon>
        <taxon>Eutheria</taxon>
        <taxon>Euarchontoglires</taxon>
        <taxon>Primates</taxon>
        <taxon>Haplorrhini</taxon>
        <taxon>Catarrhini</taxon>
        <taxon>Cercopithecidae</taxon>
        <taxon>Cercopithecinae</taxon>
        <taxon>Macaca</taxon>
    </lineage>
</organism>
<sequence>MQRSPLEKASVVSKLFFSWTRPILRKGYRQRLELSDIYQIPSADSADNLSEKLEREWDRELASKKNPKLINALRRCFFWRFMFYGILLYLGEVTKAVQPLLLGRIIASYDPDNKEERSIAIYLGIGLCLLFIVRTLLLHPAIFGLHHIGMQMRIAMFSLIYKKTLKLSSRVLDKISIGQLVSLLSNNLNKFDEGLALAHFVWIVPLQVALLMGLIWELLQASAFCGLGFLIVLALFQAGLGRMMMKYRDQRAGKINERLVITSEMIENIQSVKAYCWEEAMEKMIENLRQTELKLTRKAAYVRYFNSSAFFFSGFFVVFLSVLPYALIKGIVLRKIFTTISFCIVLRMAVTRQFPWAVQTWYDSLGAINKIQDFLQKQEYKTLEYNLTTTEVVMENVTAFWEEGFGELFEKAKQNNSNRKTSNDDDSLFFSNFSLLGTPVLKDINFKIERGQLLAVAGSTGAGKTSLLMMIMGELEPSEGKIKHSGRISFCSQFSWIMPGTIKENIIFGVSYDEYRYRSVINACQLEEDISKFAEKDNIVLGEGGITLSGGQRARISLARAVYKDADLYLLDSPFGYLDVLTEKEIFESCVCKLMANKTRILVTSKMEHLKKADKILILHEGSSYFYGTFSELQNLRPDFSSKLMGYDSFDQFSAERRNSILTETLRRFSLEGDAPVSWTETKKQSFKQTGEFGEKRKNSILNPINSIRKFSIVQKTPLQMNGIEEDSDEPLERRLSLVPDSEQGEVILPRISVISTGPTLQARRRQSVLNLMTHSVNQGQSIHRKTAASTRKVSLAPQANLTELDIYSRRLSQETGLEISEEINEEDLKECFFDDMESIPAVTTWNTYLRYITVHKSLIFVLIWCLVIFLAEVAASLVVLWFLGNTPPQDKGNSTYSRNNSYAVIITRTSSYYVFYIYVGVADTLLAMGFFRGLPLVHTLITVSKILHHKMLHSVLQAPMSTLNTLKAGGILNRFSKDIAILDDLLPLTIFDFIQLLLIVIGAIAVVAVLQPYIFVATVPVIVAFIMLRAYFLQTSQQLKQLESEGRSPIFTHLVTSLKGLWTLRAFGRQPYFETLFHKALNLHTANWFLYLSTLRWFQMRIEMIFVIFFIAVTFISILTTGEGEGTVGIILTLAMNIMSTLQWAVNSSIDVDSLMRSVSRVFKFIDMPTEEGKPTRSTKPYKNGQLSKVMVIENSHVKKDDIWPSGGQMTVKDLTAKYTEGGNPILENISFSISPGQRVGLLGRTGSGKSTLLSAFLRLLNTEGEIQIDGVSWDSITLQQWRKAFGVIPQKVFIFSGTFRKNLDPYEQWSDQEIWKVADEVGLRSVIEQFPGKLDFVLVDGGCVLSHGHKQLMCLARSVLSKAKILLLDEPSAHLDPVTYQIIRRTLKQAFADCTVILCEHRIEAMLECQQFLVIEENKVRQYDSIQKLLNERSLFQQAISPSDRVKLFPHRNSSKCKTQPQIAALKEETEEEVQDTRL</sequence>
<name>CFTR_MACNE</name>
<accession>Q9TUQ2</accession>
<gene>
    <name evidence="1" type="primary">CFTR</name>
    <name type="synonym">ABCC7</name>
</gene>
<dbReference type="EC" id="5.6.1.6" evidence="1"/>
<dbReference type="EMBL" id="AF162400">
    <property type="protein sequence ID" value="AAD46905.1"/>
    <property type="molecule type" value="Genomic_DNA"/>
</dbReference>
<dbReference type="EMBL" id="AF162393">
    <property type="protein sequence ID" value="AAD46905.1"/>
    <property type="status" value="JOINED"/>
    <property type="molecule type" value="Genomic_DNA"/>
</dbReference>
<dbReference type="EMBL" id="AF162394">
    <property type="protein sequence ID" value="AAD46905.1"/>
    <property type="status" value="JOINED"/>
    <property type="molecule type" value="Genomic_DNA"/>
</dbReference>
<dbReference type="EMBL" id="AF162395">
    <property type="protein sequence ID" value="AAD46905.1"/>
    <property type="status" value="JOINED"/>
    <property type="molecule type" value="Genomic_DNA"/>
</dbReference>
<dbReference type="EMBL" id="AF162397">
    <property type="protein sequence ID" value="AAD46905.1"/>
    <property type="status" value="JOINED"/>
    <property type="molecule type" value="Genomic_DNA"/>
</dbReference>
<dbReference type="EMBL" id="AF162399">
    <property type="protein sequence ID" value="AAD46905.1"/>
    <property type="status" value="JOINED"/>
    <property type="molecule type" value="Genomic_DNA"/>
</dbReference>
<dbReference type="EMBL" id="AF162375">
    <property type="protein sequence ID" value="AAD46905.1"/>
    <property type="status" value="JOINED"/>
    <property type="molecule type" value="Genomic_DNA"/>
</dbReference>
<dbReference type="EMBL" id="AF162377">
    <property type="protein sequence ID" value="AAD46905.1"/>
    <property type="status" value="JOINED"/>
    <property type="molecule type" value="Genomic_DNA"/>
</dbReference>
<dbReference type="EMBL" id="AF162379">
    <property type="protein sequence ID" value="AAD46905.1"/>
    <property type="status" value="JOINED"/>
    <property type="molecule type" value="Genomic_DNA"/>
</dbReference>
<dbReference type="EMBL" id="AF162381">
    <property type="protein sequence ID" value="AAD46905.1"/>
    <property type="status" value="JOINED"/>
    <property type="molecule type" value="Genomic_DNA"/>
</dbReference>
<dbReference type="EMBL" id="AF162389">
    <property type="protein sequence ID" value="AAD46905.1"/>
    <property type="status" value="JOINED"/>
    <property type="molecule type" value="Genomic_DNA"/>
</dbReference>
<dbReference type="EMBL" id="AF162388">
    <property type="protein sequence ID" value="AAD46905.1"/>
    <property type="status" value="JOINED"/>
    <property type="molecule type" value="Genomic_DNA"/>
</dbReference>
<dbReference type="EMBL" id="AF162387">
    <property type="protein sequence ID" value="AAD46905.1"/>
    <property type="status" value="JOINED"/>
    <property type="molecule type" value="Genomic_DNA"/>
</dbReference>
<dbReference type="EMBL" id="AF162386">
    <property type="protein sequence ID" value="AAD46905.1"/>
    <property type="status" value="JOINED"/>
    <property type="molecule type" value="Genomic_DNA"/>
</dbReference>
<dbReference type="EMBL" id="AF162385">
    <property type="protein sequence ID" value="AAD46905.1"/>
    <property type="status" value="JOINED"/>
    <property type="molecule type" value="Genomic_DNA"/>
</dbReference>
<dbReference type="EMBL" id="AF162384">
    <property type="protein sequence ID" value="AAD46905.1"/>
    <property type="status" value="JOINED"/>
    <property type="molecule type" value="Genomic_DNA"/>
</dbReference>
<dbReference type="EMBL" id="AF162383">
    <property type="protein sequence ID" value="AAD46905.1"/>
    <property type="status" value="JOINED"/>
    <property type="molecule type" value="Genomic_DNA"/>
</dbReference>
<dbReference type="EMBL" id="AF162382">
    <property type="protein sequence ID" value="AAD46905.1"/>
    <property type="status" value="JOINED"/>
    <property type="molecule type" value="Genomic_DNA"/>
</dbReference>
<dbReference type="EMBL" id="AF162392">
    <property type="protein sequence ID" value="AAD46905.1"/>
    <property type="status" value="JOINED"/>
    <property type="molecule type" value="Genomic_DNA"/>
</dbReference>
<dbReference type="EMBL" id="AF162391">
    <property type="protein sequence ID" value="AAD46905.1"/>
    <property type="status" value="JOINED"/>
    <property type="molecule type" value="Genomic_DNA"/>
</dbReference>
<dbReference type="EMBL" id="AF162390">
    <property type="protein sequence ID" value="AAD46905.1"/>
    <property type="status" value="JOINED"/>
    <property type="molecule type" value="Genomic_DNA"/>
</dbReference>
<dbReference type="EMBL" id="AF162380">
    <property type="protein sequence ID" value="AAD46905.1"/>
    <property type="status" value="JOINED"/>
    <property type="molecule type" value="Genomic_DNA"/>
</dbReference>
<dbReference type="EMBL" id="AF162378">
    <property type="protein sequence ID" value="AAD46905.1"/>
    <property type="status" value="JOINED"/>
    <property type="molecule type" value="Genomic_DNA"/>
</dbReference>
<dbReference type="EMBL" id="AF162376">
    <property type="protein sequence ID" value="AAD46905.1"/>
    <property type="status" value="JOINED"/>
    <property type="molecule type" value="Genomic_DNA"/>
</dbReference>
<dbReference type="EMBL" id="AF162374">
    <property type="protein sequence ID" value="AAD46905.1"/>
    <property type="status" value="JOINED"/>
    <property type="molecule type" value="Genomic_DNA"/>
</dbReference>
<dbReference type="EMBL" id="AF162398">
    <property type="protein sequence ID" value="AAD46905.1"/>
    <property type="status" value="JOINED"/>
    <property type="molecule type" value="Genomic_DNA"/>
</dbReference>
<dbReference type="EMBL" id="AF162396">
    <property type="protein sequence ID" value="AAD46905.1"/>
    <property type="status" value="JOINED"/>
    <property type="molecule type" value="Genomic_DNA"/>
</dbReference>
<dbReference type="SMR" id="Q9TUQ2"/>
<dbReference type="STRING" id="9545.ENSMNEP00000039255"/>
<dbReference type="GlyCosmos" id="Q9TUQ2">
    <property type="glycosylation" value="2 sites, No reported glycans"/>
</dbReference>
<dbReference type="Proteomes" id="UP000233120">
    <property type="component" value="Unassembled WGS sequence"/>
</dbReference>
<dbReference type="GO" id="GO:0016324">
    <property type="term" value="C:apical plasma membrane"/>
    <property type="evidence" value="ECO:0000250"/>
    <property type="project" value="UniProtKB"/>
</dbReference>
<dbReference type="GO" id="GO:0034707">
    <property type="term" value="C:chloride channel complex"/>
    <property type="evidence" value="ECO:0007669"/>
    <property type="project" value="UniProtKB-KW"/>
</dbReference>
<dbReference type="GO" id="GO:0005829">
    <property type="term" value="C:cytosol"/>
    <property type="evidence" value="ECO:0007669"/>
    <property type="project" value="TreeGrafter"/>
</dbReference>
<dbReference type="GO" id="GO:0005769">
    <property type="term" value="C:early endosome"/>
    <property type="evidence" value="ECO:0000250"/>
    <property type="project" value="UniProtKB"/>
</dbReference>
<dbReference type="GO" id="GO:0031901">
    <property type="term" value="C:early endosome membrane"/>
    <property type="evidence" value="ECO:0007669"/>
    <property type="project" value="UniProtKB-SubCell"/>
</dbReference>
<dbReference type="GO" id="GO:0005789">
    <property type="term" value="C:endoplasmic reticulum membrane"/>
    <property type="evidence" value="ECO:0000250"/>
    <property type="project" value="UniProtKB"/>
</dbReference>
<dbReference type="GO" id="GO:0016020">
    <property type="term" value="C:membrane"/>
    <property type="evidence" value="ECO:0000250"/>
    <property type="project" value="UniProtKB"/>
</dbReference>
<dbReference type="GO" id="GO:0005634">
    <property type="term" value="C:nucleus"/>
    <property type="evidence" value="ECO:0000250"/>
    <property type="project" value="UniProtKB"/>
</dbReference>
<dbReference type="GO" id="GO:0005886">
    <property type="term" value="C:plasma membrane"/>
    <property type="evidence" value="ECO:0000250"/>
    <property type="project" value="UniProtKB"/>
</dbReference>
<dbReference type="GO" id="GO:0055038">
    <property type="term" value="C:recycling endosome membrane"/>
    <property type="evidence" value="ECO:0007669"/>
    <property type="project" value="UniProtKB-SubCell"/>
</dbReference>
<dbReference type="GO" id="GO:0140359">
    <property type="term" value="F:ABC-type transporter activity"/>
    <property type="evidence" value="ECO:0007669"/>
    <property type="project" value="InterPro"/>
</dbReference>
<dbReference type="GO" id="GO:0005524">
    <property type="term" value="F:ATP binding"/>
    <property type="evidence" value="ECO:0007669"/>
    <property type="project" value="UniProtKB-KW"/>
</dbReference>
<dbReference type="GO" id="GO:0016887">
    <property type="term" value="F:ATP hydrolysis activity"/>
    <property type="evidence" value="ECO:0000250"/>
    <property type="project" value="UniProtKB"/>
</dbReference>
<dbReference type="GO" id="GO:0015106">
    <property type="term" value="F:bicarbonate transmembrane transporter activity"/>
    <property type="evidence" value="ECO:0000250"/>
    <property type="project" value="UniProtKB"/>
</dbReference>
<dbReference type="GO" id="GO:0005254">
    <property type="term" value="F:chloride channel activity"/>
    <property type="evidence" value="ECO:0000250"/>
    <property type="project" value="UniProtKB"/>
</dbReference>
<dbReference type="GO" id="GO:0019869">
    <property type="term" value="F:chloride channel inhibitor activity"/>
    <property type="evidence" value="ECO:0000250"/>
    <property type="project" value="UniProtKB"/>
</dbReference>
<dbReference type="GO" id="GO:0015108">
    <property type="term" value="F:chloride transmembrane transporter activity"/>
    <property type="evidence" value="ECO:0000250"/>
    <property type="project" value="UniProtKB"/>
</dbReference>
<dbReference type="GO" id="GO:0005260">
    <property type="term" value="F:intracellularly ATP-gated chloride channel activity"/>
    <property type="evidence" value="ECO:0000250"/>
    <property type="project" value="UniProtKB"/>
</dbReference>
<dbReference type="GO" id="GO:0015701">
    <property type="term" value="P:bicarbonate transport"/>
    <property type="evidence" value="ECO:0000250"/>
    <property type="project" value="UniProtKB"/>
</dbReference>
<dbReference type="GO" id="GO:0071320">
    <property type="term" value="P:cellular response to cAMP"/>
    <property type="evidence" value="ECO:0000250"/>
    <property type="project" value="UniProtKB"/>
</dbReference>
<dbReference type="GO" id="GO:1904322">
    <property type="term" value="P:cellular response to forskolin"/>
    <property type="evidence" value="ECO:0000250"/>
    <property type="project" value="UniProtKB"/>
</dbReference>
<dbReference type="GO" id="GO:1902476">
    <property type="term" value="P:chloride transmembrane transport"/>
    <property type="evidence" value="ECO:0000250"/>
    <property type="project" value="UniProtKB"/>
</dbReference>
<dbReference type="GO" id="GO:0051454">
    <property type="term" value="P:intracellular pH elevation"/>
    <property type="evidence" value="ECO:0000250"/>
    <property type="project" value="UniProtKB"/>
</dbReference>
<dbReference type="GO" id="GO:0060081">
    <property type="term" value="P:membrane hyperpolarization"/>
    <property type="evidence" value="ECO:0000250"/>
    <property type="project" value="UniProtKB"/>
</dbReference>
<dbReference type="GO" id="GO:0050891">
    <property type="term" value="P:multicellular organismal-level water homeostasis"/>
    <property type="evidence" value="ECO:0000250"/>
    <property type="project" value="UniProtKB"/>
</dbReference>
<dbReference type="GO" id="GO:0034976">
    <property type="term" value="P:response to endoplasmic reticulum stress"/>
    <property type="evidence" value="ECO:0000250"/>
    <property type="project" value="UniProtKB"/>
</dbReference>
<dbReference type="GO" id="GO:0048240">
    <property type="term" value="P:sperm capacitation"/>
    <property type="evidence" value="ECO:0000250"/>
    <property type="project" value="UniProtKB"/>
</dbReference>
<dbReference type="GO" id="GO:0035377">
    <property type="term" value="P:transepithelial water transport"/>
    <property type="evidence" value="ECO:0000250"/>
    <property type="project" value="UniProtKB"/>
</dbReference>
<dbReference type="CDD" id="cd18594">
    <property type="entry name" value="ABC_6TM_CFTR_D1"/>
    <property type="match status" value="1"/>
</dbReference>
<dbReference type="CDD" id="cd18600">
    <property type="entry name" value="ABC_6TM_CFTR_D2"/>
    <property type="match status" value="1"/>
</dbReference>
<dbReference type="CDD" id="cd03291">
    <property type="entry name" value="ABCC_CFTR1"/>
    <property type="match status" value="1"/>
</dbReference>
<dbReference type="CDD" id="cd03289">
    <property type="entry name" value="ABCC_CFTR2"/>
    <property type="match status" value="1"/>
</dbReference>
<dbReference type="FunFam" id="1.20.1560.10:FF:000017">
    <property type="entry name" value="Cystic fibrosis transmembrane conductance regulator"/>
    <property type="match status" value="1"/>
</dbReference>
<dbReference type="FunFam" id="1.20.1560.10:FF:000019">
    <property type="entry name" value="Cystic fibrosis transmembrane conductance regulator"/>
    <property type="match status" value="1"/>
</dbReference>
<dbReference type="FunFam" id="3.40.50.300:FF:000581">
    <property type="entry name" value="Cystic fibrosis transmembrane conductance regulator"/>
    <property type="match status" value="1"/>
</dbReference>
<dbReference type="FunFam" id="3.40.50.300:FF:000591">
    <property type="entry name" value="Cystic fibrosis transmembrane conductance regulator"/>
    <property type="match status" value="1"/>
</dbReference>
<dbReference type="Gene3D" id="1.20.1560.10">
    <property type="entry name" value="ABC transporter type 1, transmembrane domain"/>
    <property type="match status" value="2"/>
</dbReference>
<dbReference type="Gene3D" id="3.40.50.300">
    <property type="entry name" value="P-loop containing nucleotide triphosphate hydrolases"/>
    <property type="match status" value="2"/>
</dbReference>
<dbReference type="InterPro" id="IPR003593">
    <property type="entry name" value="AAA+_ATPase"/>
</dbReference>
<dbReference type="InterPro" id="IPR011527">
    <property type="entry name" value="ABC1_TM_dom"/>
</dbReference>
<dbReference type="InterPro" id="IPR036640">
    <property type="entry name" value="ABC1_TM_sf"/>
</dbReference>
<dbReference type="InterPro" id="IPR003439">
    <property type="entry name" value="ABC_transporter-like_ATP-bd"/>
</dbReference>
<dbReference type="InterPro" id="IPR017871">
    <property type="entry name" value="ABC_transporter-like_CS"/>
</dbReference>
<dbReference type="InterPro" id="IPR050173">
    <property type="entry name" value="ABC_transporter_C-like"/>
</dbReference>
<dbReference type="InterPro" id="IPR009147">
    <property type="entry name" value="CFTR/ABCC7"/>
</dbReference>
<dbReference type="InterPro" id="IPR047082">
    <property type="entry name" value="CFTR1_ATP-bd_dom1"/>
</dbReference>
<dbReference type="InterPro" id="IPR025837">
    <property type="entry name" value="CFTR_reg_dom"/>
</dbReference>
<dbReference type="InterPro" id="IPR027417">
    <property type="entry name" value="P-loop_NTPase"/>
</dbReference>
<dbReference type="NCBIfam" id="TIGR01271">
    <property type="entry name" value="CFTR_protein"/>
    <property type="match status" value="1"/>
</dbReference>
<dbReference type="PANTHER" id="PTHR24223">
    <property type="entry name" value="ATP-BINDING CASSETTE SUB-FAMILY C"/>
    <property type="match status" value="1"/>
</dbReference>
<dbReference type="PANTHER" id="PTHR24223:SF19">
    <property type="entry name" value="CYSTIC FIBROSIS TRANSMEMBRANE CONDUCTANCE REGULATOR"/>
    <property type="match status" value="1"/>
</dbReference>
<dbReference type="Pfam" id="PF00664">
    <property type="entry name" value="ABC_membrane"/>
    <property type="match status" value="2"/>
</dbReference>
<dbReference type="Pfam" id="PF00005">
    <property type="entry name" value="ABC_tran"/>
    <property type="match status" value="2"/>
</dbReference>
<dbReference type="Pfam" id="PF14396">
    <property type="entry name" value="CFTR_R"/>
    <property type="match status" value="1"/>
</dbReference>
<dbReference type="PRINTS" id="PR01851">
    <property type="entry name" value="CYSFIBREGLTR"/>
</dbReference>
<dbReference type="SMART" id="SM00382">
    <property type="entry name" value="AAA"/>
    <property type="match status" value="2"/>
</dbReference>
<dbReference type="SUPFAM" id="SSF90123">
    <property type="entry name" value="ABC transporter transmembrane region"/>
    <property type="match status" value="2"/>
</dbReference>
<dbReference type="SUPFAM" id="SSF52540">
    <property type="entry name" value="P-loop containing nucleoside triphosphate hydrolases"/>
    <property type="match status" value="2"/>
</dbReference>
<dbReference type="PROSITE" id="PS50929">
    <property type="entry name" value="ABC_TM1F"/>
    <property type="match status" value="2"/>
</dbReference>
<dbReference type="PROSITE" id="PS00211">
    <property type="entry name" value="ABC_TRANSPORTER_1"/>
    <property type="match status" value="1"/>
</dbReference>
<dbReference type="PROSITE" id="PS50893">
    <property type="entry name" value="ABC_TRANSPORTER_2"/>
    <property type="match status" value="2"/>
</dbReference>
<comment type="function">
    <text evidence="1 2">Epithelial ion channel that plays an important role in the regulation of epithelial ion and water transport and fluid homeostasis. Mediates the transport of chloride ions across the cell membrane (By similarity). Possesses an intrinsic ATPase activity and utilizes ATP to gate its channel; the passive flow of anions through the channel is gated by cycles of ATP binding and hydrolysis by the ATP-binding domains (By similarity). The ion channel is also permeable to HCO(3)(-); selectivity depends on the extracellular chloride concentration. Exerts its function also by modulating the activity of other ion channels and transporters. Contributes to the regulation of the pH and the ion content of the epithelial fluid layer. Modulates the activity of the epithelial sodium channel (ENaC) complex, in part by regulating the cell surface expression of the ENaC complex. May regulate bicarbonate secretion and salvage in epithelial cells by regulating the transporter SLC4A7. Can inhibit the chloride channel activity of ANO1 (By similarity). Plays a role in the chloride and bicarbonate homeostasis during sperm epididymal maturation and capacitation (By similarity).</text>
</comment>
<comment type="catalytic activity">
    <reaction evidence="1">
        <text>ATP + H2O + closed Cl(-) channel = ADP + phosphate + open Cl(-) channel.</text>
        <dbReference type="EC" id="5.6.1.6"/>
    </reaction>
</comment>
<comment type="catalytic activity">
    <reaction evidence="1">
        <text>chloride(in) = chloride(out)</text>
        <dbReference type="Rhea" id="RHEA:29823"/>
        <dbReference type="ChEBI" id="CHEBI:17996"/>
    </reaction>
</comment>
<comment type="catalytic activity">
    <reaction evidence="1">
        <text>hydrogencarbonate(in) = hydrogencarbonate(out)</text>
        <dbReference type="Rhea" id="RHEA:28695"/>
        <dbReference type="ChEBI" id="CHEBI:17544"/>
    </reaction>
</comment>
<comment type="catalytic activity">
    <reaction evidence="1">
        <text>ATP + H2O = ADP + phosphate + H(+)</text>
        <dbReference type="Rhea" id="RHEA:13065"/>
        <dbReference type="ChEBI" id="CHEBI:15377"/>
        <dbReference type="ChEBI" id="CHEBI:15378"/>
        <dbReference type="ChEBI" id="CHEBI:30616"/>
        <dbReference type="ChEBI" id="CHEBI:43474"/>
        <dbReference type="ChEBI" id="CHEBI:456216"/>
    </reaction>
    <physiologicalReaction direction="left-to-right" evidence="1">
        <dbReference type="Rhea" id="RHEA:13066"/>
    </physiologicalReaction>
</comment>
<comment type="subunit">
    <text evidence="1 2 3">Monomer; does not require oligomerization for channel activity. May form oligomers in the membrane (By similarity). Interacts with SLC26A3, SLC26A6 and NHERF1 (By similarity). Interacts with SHANK2 (By similarity). Interacts with MYO6 (By similarity). Interacts (via C-terminus) with GOPC (via PDZ domain); this promotes CFTR internalization and thereby decreases channel activity. Interacts with SLC4A7 through NHERF1. Found in a complex with MYO5B and RAB11A. Interacts with ANO1. Interacts with SLC26A8 (By similarity). Interacts with AHCYL1; the interaction increases CFTR activity (By similarity). Interacts with CSE1L (By similarity). The core-glycosylated form interacts with GORASP2 (via PDZ GRASP-type 1 domain) in respone to ER stress (By similarity). Interacts with MARCHF2; the interaction leads to CFTR ubiqtuitination and degradation (By similarity). Interacts with ADGRG2 (By similarity).</text>
</comment>
<comment type="subcellular location">
    <subcellularLocation>
        <location evidence="2">Apical cell membrane</location>
        <topology evidence="1">Multi-pass membrane protein</topology>
    </subcellularLocation>
    <subcellularLocation>
        <location evidence="1">Early endosome membrane</location>
        <topology evidence="1">Multi-pass membrane protein</topology>
    </subcellularLocation>
    <subcellularLocation>
        <location evidence="2">Cell membrane</location>
        <topology evidence="1">Multi-pass membrane protein</topology>
    </subcellularLocation>
    <subcellularLocation>
        <location evidence="1">Recycling endosome membrane</location>
        <topology evidence="1">Multi-pass membrane protein</topology>
    </subcellularLocation>
    <subcellularLocation>
        <location evidence="1">Endoplasmic reticulum membrane</location>
        <topology evidence="1">Multi-pass membrane protein</topology>
    </subcellularLocation>
    <subcellularLocation>
        <location evidence="3">Nucleus</location>
    </subcellularLocation>
    <text evidence="1 3">The channel is internalized from the cell surface into an endosomal recycling compartment, from where it is recycled to the cell membrane. In the oviduct and bronchus, detected on the apical side of epithelial cells, but not associated with cilia. In Sertoli cells, a processed product is detected in the nucleus. ER stress induces GORASP2-mediated unconventional (ER/Golgi-independent) trafficking of core-glycosylated CFTR to cell membrane.</text>
</comment>
<comment type="domain">
    <text evidence="1 2">Binds and hydrolyzes ATP via the two cytoplasmic ABC transporter nucleotide-binding domains. The two ATP-binding domains interact with each other, forming a head-to-tail dimer. Normal ATPase activity requires interaction between the two domains. The first ABC transporter nucleotide-binding domain has no ATPase activity by itself.</text>
</comment>
<comment type="domain">
    <text evidence="1">The PDZ-binding motif mediates interactions with GOPC and with the SLC4A7, NHERF1/EBP50 complex.</text>
</comment>
<comment type="domain">
    <text evidence="1">The disordered R region mediates channel activation when it is phosphorylated, but not in the absence of phosphorylation.</text>
</comment>
<comment type="PTM">
    <text evidence="1">N-glycosylated.</text>
</comment>
<comment type="PTM">
    <text evidence="1">Phosphorylated; cAMP treatment promotes phosphorylation and activates the channel. Dephosphorylation decreases the ATPase activity (in vitro). Phosphorylation at PKA sites activates the channel. Phosphorylation at PKC sites enhances the response to phosphorylation by PKA. Phosphorylated by AMPK; this inhibits channel activity.</text>
</comment>
<comment type="PTM">
    <text evidence="1">Ubiquitinated, leading to its degradation in the lysosome. Deubiquitination by USP10 in early endosomes enhances its endocytic recycling to the cell membrane. Ubiquitinated by RNF185 during ER stress. Ubiquitinated by MARCHF2 (By similarity).</text>
</comment>
<comment type="similarity">
    <text evidence="7">Belongs to the ABC transporter superfamily. ABCC family. CFTR transporter (TC 3.A.1.202) subfamily.</text>
</comment>